<reference key="1">
    <citation type="journal article" date="2013" name="Nature">
        <title>The zebrafish reference genome sequence and its relationship to the human genome.</title>
        <authorList>
            <person name="Howe K."/>
            <person name="Clark M.D."/>
            <person name="Torroja C.F."/>
            <person name="Torrance J."/>
            <person name="Berthelot C."/>
            <person name="Muffato M."/>
            <person name="Collins J.E."/>
            <person name="Humphray S."/>
            <person name="McLaren K."/>
            <person name="Matthews L."/>
            <person name="McLaren S."/>
            <person name="Sealy I."/>
            <person name="Caccamo M."/>
            <person name="Churcher C."/>
            <person name="Scott C."/>
            <person name="Barrett J.C."/>
            <person name="Koch R."/>
            <person name="Rauch G.J."/>
            <person name="White S."/>
            <person name="Chow W."/>
            <person name="Kilian B."/>
            <person name="Quintais L.T."/>
            <person name="Guerra-Assuncao J.A."/>
            <person name="Zhou Y."/>
            <person name="Gu Y."/>
            <person name="Yen J."/>
            <person name="Vogel J.H."/>
            <person name="Eyre T."/>
            <person name="Redmond S."/>
            <person name="Banerjee R."/>
            <person name="Chi J."/>
            <person name="Fu B."/>
            <person name="Langley E."/>
            <person name="Maguire S.F."/>
            <person name="Laird G.K."/>
            <person name="Lloyd D."/>
            <person name="Kenyon E."/>
            <person name="Donaldson S."/>
            <person name="Sehra H."/>
            <person name="Almeida-King J."/>
            <person name="Loveland J."/>
            <person name="Trevanion S."/>
            <person name="Jones M."/>
            <person name="Quail M."/>
            <person name="Willey D."/>
            <person name="Hunt A."/>
            <person name="Burton J."/>
            <person name="Sims S."/>
            <person name="McLay K."/>
            <person name="Plumb B."/>
            <person name="Davis J."/>
            <person name="Clee C."/>
            <person name="Oliver K."/>
            <person name="Clark R."/>
            <person name="Riddle C."/>
            <person name="Elliot D."/>
            <person name="Threadgold G."/>
            <person name="Harden G."/>
            <person name="Ware D."/>
            <person name="Begum S."/>
            <person name="Mortimore B."/>
            <person name="Kerry G."/>
            <person name="Heath P."/>
            <person name="Phillimore B."/>
            <person name="Tracey A."/>
            <person name="Corby N."/>
            <person name="Dunn M."/>
            <person name="Johnson C."/>
            <person name="Wood J."/>
            <person name="Clark S."/>
            <person name="Pelan S."/>
            <person name="Griffiths G."/>
            <person name="Smith M."/>
            <person name="Glithero R."/>
            <person name="Howden P."/>
            <person name="Barker N."/>
            <person name="Lloyd C."/>
            <person name="Stevens C."/>
            <person name="Harley J."/>
            <person name="Holt K."/>
            <person name="Panagiotidis G."/>
            <person name="Lovell J."/>
            <person name="Beasley H."/>
            <person name="Henderson C."/>
            <person name="Gordon D."/>
            <person name="Auger K."/>
            <person name="Wright D."/>
            <person name="Collins J."/>
            <person name="Raisen C."/>
            <person name="Dyer L."/>
            <person name="Leung K."/>
            <person name="Robertson L."/>
            <person name="Ambridge K."/>
            <person name="Leongamornlert D."/>
            <person name="McGuire S."/>
            <person name="Gilderthorp R."/>
            <person name="Griffiths C."/>
            <person name="Manthravadi D."/>
            <person name="Nichol S."/>
            <person name="Barker G."/>
            <person name="Whitehead S."/>
            <person name="Kay M."/>
            <person name="Brown J."/>
            <person name="Murnane C."/>
            <person name="Gray E."/>
            <person name="Humphries M."/>
            <person name="Sycamore N."/>
            <person name="Barker D."/>
            <person name="Saunders D."/>
            <person name="Wallis J."/>
            <person name="Babbage A."/>
            <person name="Hammond S."/>
            <person name="Mashreghi-Mohammadi M."/>
            <person name="Barr L."/>
            <person name="Martin S."/>
            <person name="Wray P."/>
            <person name="Ellington A."/>
            <person name="Matthews N."/>
            <person name="Ellwood M."/>
            <person name="Woodmansey R."/>
            <person name="Clark G."/>
            <person name="Cooper J."/>
            <person name="Tromans A."/>
            <person name="Grafham D."/>
            <person name="Skuce C."/>
            <person name="Pandian R."/>
            <person name="Andrews R."/>
            <person name="Harrison E."/>
            <person name="Kimberley A."/>
            <person name="Garnett J."/>
            <person name="Fosker N."/>
            <person name="Hall R."/>
            <person name="Garner P."/>
            <person name="Kelly D."/>
            <person name="Bird C."/>
            <person name="Palmer S."/>
            <person name="Gehring I."/>
            <person name="Berger A."/>
            <person name="Dooley C.M."/>
            <person name="Ersan-Urun Z."/>
            <person name="Eser C."/>
            <person name="Geiger H."/>
            <person name="Geisler M."/>
            <person name="Karotki L."/>
            <person name="Kirn A."/>
            <person name="Konantz J."/>
            <person name="Konantz M."/>
            <person name="Oberlander M."/>
            <person name="Rudolph-Geiger S."/>
            <person name="Teucke M."/>
            <person name="Lanz C."/>
            <person name="Raddatz G."/>
            <person name="Osoegawa K."/>
            <person name="Zhu B."/>
            <person name="Rapp A."/>
            <person name="Widaa S."/>
            <person name="Langford C."/>
            <person name="Yang F."/>
            <person name="Schuster S.C."/>
            <person name="Carter N.P."/>
            <person name="Harrow J."/>
            <person name="Ning Z."/>
            <person name="Herrero J."/>
            <person name="Searle S.M."/>
            <person name="Enright A."/>
            <person name="Geisler R."/>
            <person name="Plasterk R.H."/>
            <person name="Lee C."/>
            <person name="Westerfield M."/>
            <person name="de Jong P.J."/>
            <person name="Zon L.I."/>
            <person name="Postlethwait J.H."/>
            <person name="Nusslein-Volhard C."/>
            <person name="Hubbard T.J."/>
            <person name="Roest Crollius H."/>
            <person name="Rogers J."/>
            <person name="Stemple D.L."/>
        </authorList>
    </citation>
    <scope>NUCLEOTIDE SEQUENCE [LARGE SCALE GENOMIC DNA]</scope>
    <source>
        <strain>Tuebingen</strain>
    </source>
</reference>
<reference key="2">
    <citation type="journal article" date="2013" name="Am. J. Hum. Genet.">
        <title>Mutations in KLHL40 are a frequent cause of severe autosomal-recessive nemaline myopathy.</title>
        <authorList>
            <person name="Ravenscroft G."/>
            <person name="Miyatake S."/>
            <person name="Lehtokari V.L."/>
            <person name="Todd E.J."/>
            <person name="Vornanen P."/>
            <person name="Yau K.S."/>
            <person name="Hayashi Y.K."/>
            <person name="Miyake N."/>
            <person name="Tsurusaki Y."/>
            <person name="Doi H."/>
            <person name="Saitsu H."/>
            <person name="Osaka H."/>
            <person name="Yamashita S."/>
            <person name="Ohya T."/>
            <person name="Sakamoto Y."/>
            <person name="Koshimizu E."/>
            <person name="Imamura S."/>
            <person name="Yamashita M."/>
            <person name="Ogata K."/>
            <person name="Shiina M."/>
            <person name="Bryson-Richardson R.J."/>
            <person name="Vaz R."/>
            <person name="Ceyhan O."/>
            <person name="Brownstein C.A."/>
            <person name="Swanson L.C."/>
            <person name="Monnot S."/>
            <person name="Romero N.B."/>
            <person name="Amthor H."/>
            <person name="Kresoje N."/>
            <person name="Sivadorai P."/>
            <person name="Kiraly-Borri C."/>
            <person name="Haliloglu G."/>
            <person name="Talim B."/>
            <person name="Orhan D."/>
            <person name="Kale G."/>
            <person name="Charles A.K."/>
            <person name="Fabian V.A."/>
            <person name="Davis M.R."/>
            <person name="Lammens M."/>
            <person name="Sewry C.A."/>
            <person name="Manzur A."/>
            <person name="Muntoni F."/>
            <person name="Clarke N.F."/>
            <person name="North K.N."/>
            <person name="Bertini E."/>
            <person name="Nevo Y."/>
            <person name="Willichowski E."/>
            <person name="Silberg I.E."/>
            <person name="Topaloglu H."/>
            <person name="Beggs A.H."/>
            <person name="Allcock R.J."/>
            <person name="Nishino I."/>
            <person name="Wallgren-Pettersson C."/>
            <person name="Matsumoto N."/>
            <person name="Laing N.G."/>
        </authorList>
    </citation>
    <scope>FUNCTION</scope>
    <scope>TISSUE SPECIFICITY</scope>
    <scope>DEVELOPMENTAL STAGE</scope>
    <scope>DISRUPTION PHENOTYPE</scope>
</reference>
<name>KL40B_DANRE</name>
<proteinExistence type="evidence at transcript level"/>
<feature type="chain" id="PRO_0000423864" description="Kelch-like protein 40b">
    <location>
        <begin position="1"/>
        <end position="618"/>
    </location>
</feature>
<feature type="domain" description="BTB" evidence="2">
    <location>
        <begin position="33"/>
        <end position="100"/>
    </location>
</feature>
<feature type="domain" description="BACK">
    <location>
        <begin position="135"/>
        <end position="237"/>
    </location>
</feature>
<feature type="repeat" description="Kelch 1">
    <location>
        <begin position="356"/>
        <end position="408"/>
    </location>
</feature>
<feature type="repeat" description="Kelch 2">
    <location>
        <begin position="409"/>
        <end position="458"/>
    </location>
</feature>
<feature type="repeat" description="Kelch 3">
    <location>
        <begin position="459"/>
        <end position="506"/>
    </location>
</feature>
<feature type="repeat" description="Kelch 4">
    <location>
        <begin position="508"/>
        <end position="553"/>
    </location>
</feature>
<feature type="repeat" description="Kelch 5">
    <location>
        <begin position="555"/>
        <end position="608"/>
    </location>
</feature>
<feature type="region of interest" description="Disordered" evidence="3">
    <location>
        <begin position="264"/>
        <end position="297"/>
    </location>
</feature>
<feature type="compositionally biased region" description="Basic and acidic residues" evidence="3">
    <location>
        <begin position="264"/>
        <end position="284"/>
    </location>
</feature>
<feature type="compositionally biased region" description="Acidic residues" evidence="3">
    <location>
        <begin position="285"/>
        <end position="295"/>
    </location>
</feature>
<organism>
    <name type="scientific">Danio rerio</name>
    <name type="common">Zebrafish</name>
    <name type="synonym">Brachydanio rerio</name>
    <dbReference type="NCBI Taxonomy" id="7955"/>
    <lineage>
        <taxon>Eukaryota</taxon>
        <taxon>Metazoa</taxon>
        <taxon>Chordata</taxon>
        <taxon>Craniata</taxon>
        <taxon>Vertebrata</taxon>
        <taxon>Euteleostomi</taxon>
        <taxon>Actinopterygii</taxon>
        <taxon>Neopterygii</taxon>
        <taxon>Teleostei</taxon>
        <taxon>Ostariophysi</taxon>
        <taxon>Cypriniformes</taxon>
        <taxon>Danionidae</taxon>
        <taxon>Danioninae</taxon>
        <taxon>Danio</taxon>
    </lineage>
</organism>
<protein>
    <recommendedName>
        <fullName>Kelch-like protein 40b</fullName>
    </recommendedName>
    <alternativeName>
        <fullName>Kelch repeat and BTB domain-containing protein 5b</fullName>
    </alternativeName>
</protein>
<dbReference type="EMBL" id="BX571770">
    <property type="status" value="NOT_ANNOTATED_CDS"/>
    <property type="molecule type" value="Genomic_DNA"/>
</dbReference>
<dbReference type="RefSeq" id="NP_001410734.1">
    <property type="nucleotide sequence ID" value="NM_001423805.1"/>
</dbReference>
<dbReference type="RefSeq" id="XP_001334076.1">
    <property type="nucleotide sequence ID" value="XM_001334040.6"/>
</dbReference>
<dbReference type="SMR" id="E9QJ30"/>
<dbReference type="FunCoup" id="E9QJ30">
    <property type="interactions" value="105"/>
</dbReference>
<dbReference type="STRING" id="7955.ENSDARP00000012991"/>
<dbReference type="PaxDb" id="7955-ENSDARP00000012991"/>
<dbReference type="PeptideAtlas" id="E9QJ30"/>
<dbReference type="Ensembl" id="ENSDART00000010488">
    <property type="protein sequence ID" value="ENSDARP00000012991"/>
    <property type="gene ID" value="ENSDARG00000019125"/>
</dbReference>
<dbReference type="GeneID" id="795319"/>
<dbReference type="eggNOG" id="KOG4441">
    <property type="taxonomic scope" value="Eukaryota"/>
</dbReference>
<dbReference type="HOGENOM" id="CLU_004253_14_4_1"/>
<dbReference type="InParanoid" id="E9QJ30"/>
<dbReference type="OMA" id="RNFACER"/>
<dbReference type="OrthoDB" id="6359816at2759"/>
<dbReference type="PhylomeDB" id="E9QJ30"/>
<dbReference type="TreeFam" id="TF351653"/>
<dbReference type="PRO" id="PR:E9QJ30"/>
<dbReference type="Proteomes" id="UP000000437">
    <property type="component" value="Chromosome 24"/>
</dbReference>
<dbReference type="Bgee" id="ENSDARG00000019125">
    <property type="expression patterns" value="Expressed in muscle tissue and 11 other cell types or tissues"/>
</dbReference>
<dbReference type="GO" id="GO:0031672">
    <property type="term" value="C:A band"/>
    <property type="evidence" value="ECO:0007669"/>
    <property type="project" value="UniProtKB-SubCell"/>
</dbReference>
<dbReference type="GO" id="GO:0031463">
    <property type="term" value="C:Cul3-RING ubiquitin ligase complex"/>
    <property type="evidence" value="ECO:0000250"/>
    <property type="project" value="UniProtKB"/>
</dbReference>
<dbReference type="GO" id="GO:0005737">
    <property type="term" value="C:cytoplasm"/>
    <property type="evidence" value="ECO:0000250"/>
    <property type="project" value="UniProtKB"/>
</dbReference>
<dbReference type="GO" id="GO:0031674">
    <property type="term" value="C:I band"/>
    <property type="evidence" value="ECO:0007669"/>
    <property type="project" value="UniProtKB-SubCell"/>
</dbReference>
<dbReference type="GO" id="GO:1990756">
    <property type="term" value="F:ubiquitin-like ligase-substrate adaptor activity"/>
    <property type="evidence" value="ECO:0000318"/>
    <property type="project" value="GO_Central"/>
</dbReference>
<dbReference type="GO" id="GO:0061061">
    <property type="term" value="P:muscle structure development"/>
    <property type="evidence" value="ECO:0000315"/>
    <property type="project" value="ZFIN"/>
</dbReference>
<dbReference type="GO" id="GO:0032436">
    <property type="term" value="P:positive regulation of proteasomal ubiquitin-dependent protein catabolic process"/>
    <property type="evidence" value="ECO:0000250"/>
    <property type="project" value="UniProtKB"/>
</dbReference>
<dbReference type="GO" id="GO:0031398">
    <property type="term" value="P:positive regulation of protein ubiquitination"/>
    <property type="evidence" value="ECO:0000250"/>
    <property type="project" value="UniProtKB"/>
</dbReference>
<dbReference type="GO" id="GO:0043161">
    <property type="term" value="P:proteasome-mediated ubiquitin-dependent protein catabolic process"/>
    <property type="evidence" value="ECO:0000318"/>
    <property type="project" value="GO_Central"/>
</dbReference>
<dbReference type="GO" id="GO:0048741">
    <property type="term" value="P:skeletal muscle fiber development"/>
    <property type="evidence" value="ECO:0000315"/>
    <property type="project" value="ZFIN"/>
</dbReference>
<dbReference type="GO" id="GO:0098528">
    <property type="term" value="P:skeletal muscle fiber differentiation"/>
    <property type="evidence" value="ECO:0000250"/>
    <property type="project" value="UniProtKB"/>
</dbReference>
<dbReference type="GO" id="GO:0036268">
    <property type="term" value="P:swimming"/>
    <property type="evidence" value="ECO:0000316"/>
    <property type="project" value="ZFIN"/>
</dbReference>
<dbReference type="CDD" id="cd18516">
    <property type="entry name" value="BACK_KLHL40_KBTBD5"/>
    <property type="match status" value="1"/>
</dbReference>
<dbReference type="CDD" id="cd18340">
    <property type="entry name" value="BTB_POZ_KLHL40_KBTBD5"/>
    <property type="match status" value="1"/>
</dbReference>
<dbReference type="FunFam" id="3.30.710.10:FF:000006">
    <property type="entry name" value="Kelch repeat and BTB domain-containing 6"/>
    <property type="match status" value="1"/>
</dbReference>
<dbReference type="FunFam" id="1.25.40.420:FF:000001">
    <property type="entry name" value="Kelch-like family member 12"/>
    <property type="match status" value="1"/>
</dbReference>
<dbReference type="FunFam" id="2.120.10.80:FF:000025">
    <property type="entry name" value="Kelch-like family member 41"/>
    <property type="match status" value="1"/>
</dbReference>
<dbReference type="Gene3D" id="1.25.40.420">
    <property type="match status" value="1"/>
</dbReference>
<dbReference type="Gene3D" id="2.120.10.80">
    <property type="entry name" value="Kelch-type beta propeller"/>
    <property type="match status" value="1"/>
</dbReference>
<dbReference type="Gene3D" id="3.30.710.10">
    <property type="entry name" value="Potassium Channel Kv1.1, Chain A"/>
    <property type="match status" value="1"/>
</dbReference>
<dbReference type="InterPro" id="IPR011705">
    <property type="entry name" value="BACK"/>
</dbReference>
<dbReference type="InterPro" id="IPR017096">
    <property type="entry name" value="BTB-kelch_protein"/>
</dbReference>
<dbReference type="InterPro" id="IPR000210">
    <property type="entry name" value="BTB/POZ_dom"/>
</dbReference>
<dbReference type="InterPro" id="IPR015915">
    <property type="entry name" value="Kelch-typ_b-propeller"/>
</dbReference>
<dbReference type="InterPro" id="IPR006652">
    <property type="entry name" value="Kelch_1"/>
</dbReference>
<dbReference type="InterPro" id="IPR030607">
    <property type="entry name" value="KLHL40_BTB/POZ_dom"/>
</dbReference>
<dbReference type="InterPro" id="IPR011333">
    <property type="entry name" value="SKP1/BTB/POZ_sf"/>
</dbReference>
<dbReference type="PANTHER" id="PTHR24412">
    <property type="entry name" value="KELCH PROTEIN"/>
    <property type="match status" value="1"/>
</dbReference>
<dbReference type="PANTHER" id="PTHR24412:SF22">
    <property type="entry name" value="KELCH-LIKE PROTEIN 40"/>
    <property type="match status" value="1"/>
</dbReference>
<dbReference type="Pfam" id="PF07707">
    <property type="entry name" value="BACK"/>
    <property type="match status" value="1"/>
</dbReference>
<dbReference type="Pfam" id="PF00651">
    <property type="entry name" value="BTB"/>
    <property type="match status" value="1"/>
</dbReference>
<dbReference type="Pfam" id="PF24681">
    <property type="entry name" value="Kelch_KLHDC2_KLHL20_DRC7"/>
    <property type="match status" value="1"/>
</dbReference>
<dbReference type="PIRSF" id="PIRSF037037">
    <property type="entry name" value="Kelch-like_protein_gigaxonin"/>
    <property type="match status" value="1"/>
</dbReference>
<dbReference type="SMART" id="SM00875">
    <property type="entry name" value="BACK"/>
    <property type="match status" value="1"/>
</dbReference>
<dbReference type="SMART" id="SM00225">
    <property type="entry name" value="BTB"/>
    <property type="match status" value="1"/>
</dbReference>
<dbReference type="SMART" id="SM00612">
    <property type="entry name" value="Kelch"/>
    <property type="match status" value="4"/>
</dbReference>
<dbReference type="SUPFAM" id="SSF117281">
    <property type="entry name" value="Kelch motif"/>
    <property type="match status" value="1"/>
</dbReference>
<dbReference type="SUPFAM" id="SSF54695">
    <property type="entry name" value="POZ domain"/>
    <property type="match status" value="1"/>
</dbReference>
<dbReference type="PROSITE" id="PS50097">
    <property type="entry name" value="BTB"/>
    <property type="match status" value="1"/>
</dbReference>
<gene>
    <name type="primary">klhl40b</name>
    <name type="synonym">kbtbd5b</name>
</gene>
<evidence type="ECO:0000250" key="1">
    <source>
        <dbReference type="UniProtKB" id="Q9D783"/>
    </source>
</evidence>
<evidence type="ECO:0000255" key="2">
    <source>
        <dbReference type="PROSITE-ProRule" id="PRU00037"/>
    </source>
</evidence>
<evidence type="ECO:0000256" key="3">
    <source>
        <dbReference type="SAM" id="MobiDB-lite"/>
    </source>
</evidence>
<evidence type="ECO:0000269" key="4">
    <source>
    </source>
</evidence>
<evidence type="ECO:0000305" key="5"/>
<sequence>MALPIDPMEEPRMYQQTLLQDGLYDLLESDMMVDCVLKIKDKEFPCHRLVLAACSSYFRAFFKSGVEESKQREIVLEDVEPGVMGIILKYLYTSNINVTEQNVQDIFALSNMLQIPSIFTVCVSFLQKRLSLSNCLAIFRLGLMLDCPRLAISARNFACERFQFITRDEEFLQLTPSELAAVLASDSLNVETEQDVFEALIKWVGHDQENRIGDLPDLLDCIRLRLVPRDYFVKNVEKHEWLSSNPEITKKLQLVKDAHAGKLPELKKTKNKKSPSEEGQKKGDEEEVEEEEEQEERLPGILNDNLRFGMFLRELIFLINDSASVAYDPTGNDCYVASVSTQIPKNHCSLVTKENQIFVAGGLFFDEQSKDEQIYSYFLQFDPASSDWMGMPPIPSPRFLFGMGEAENFIFVIGGREMKEGENILNTVMVYDRQFLKWAESDPLPYLVYGHGVVSHNEMIYVIGGKGENKECLNRVCAYDIKTHQWKDLAPLNTARSLFGVTIHKNNIYVVAGVTDSGLTGSAEVYDIKTNKWSEFVEFPQDRSSLSLVSVSGVLYAVGGFAMFPKEDSDDLMPLEMNDIWRYDESERTWSGILRENRYASGATVLGVRLNTLRLTKM</sequence>
<comment type="function">
    <text evidence="1 4">Substrate-specific adapter of a BCR (BTB-CUL3-RBX1) E3 ubiquitin ligase complex (By similarity). Required for skeletal muscle development (PubMed:23746549).</text>
</comment>
<comment type="subunit">
    <text evidence="1">Component of the BCR(KLHL40) E3 ubiquitin ligase complex.</text>
</comment>
<comment type="subcellular location">
    <subcellularLocation>
        <location evidence="1">Cytoplasm</location>
    </subcellularLocation>
    <subcellularLocation>
        <location evidence="1">Cytoplasm</location>
        <location evidence="1">Myofibril</location>
        <location evidence="1">Sarcomere</location>
        <location evidence="1">A band</location>
    </subcellularLocation>
    <subcellularLocation>
        <location evidence="1">Cytoplasm</location>
        <location evidence="1">Myofibril</location>
        <location evidence="1">Sarcomere</location>
        <location evidence="1">I band</location>
    </subcellularLocation>
</comment>
<comment type="tissue specificity">
    <text evidence="4">Expressed in skeletal muscle. Detected in the eye at much lower levels.</text>
</comment>
<comment type="developmental stage">
    <text evidence="4">At 16 and 24 hpf, restricted to muscle precursor cells in somites. Also detected at 48 hpf.</text>
</comment>
<comment type="disruption phenotype">
    <text evidence="4">Morpholino knockdown of the protein results in a curved trunk and small head at 48 hpf. Morphants show disruption of skeletal muscle patterning with an irregular, wavy appearance of the striated myofibers and extensive gaps between the myofibers. Myofibers show disorganized and irregular patterns with small aggregates of alpha-actinin, suggesting nemaline bodies. Animals exhibit sporadic muscle tremor and coordinated swimming is not observed.</text>
</comment>
<comment type="similarity">
    <text evidence="5">Belongs to the KLHL40 family.</text>
</comment>
<accession>E9QJ30</accession>
<keyword id="KW-0963">Cytoplasm</keyword>
<keyword id="KW-0217">Developmental protein</keyword>
<keyword id="KW-0880">Kelch repeat</keyword>
<keyword id="KW-1185">Reference proteome</keyword>
<keyword id="KW-0677">Repeat</keyword>
<keyword id="KW-0833">Ubl conjugation pathway</keyword>